<organism>
    <name type="scientific">Thermoplasma volcanium (strain ATCC 51530 / DSM 4299 / JCM 9571 / NBRC 15438 / GSS1)</name>
    <dbReference type="NCBI Taxonomy" id="273116"/>
    <lineage>
        <taxon>Archaea</taxon>
        <taxon>Methanobacteriati</taxon>
        <taxon>Thermoplasmatota</taxon>
        <taxon>Thermoplasmata</taxon>
        <taxon>Thermoplasmatales</taxon>
        <taxon>Thermoplasmataceae</taxon>
        <taxon>Thermoplasma</taxon>
    </lineage>
</organism>
<keyword id="KW-0386">Hypusine biosynthesis</keyword>
<keyword id="KW-0520">NAD</keyword>
<keyword id="KW-0808">Transferase</keyword>
<proteinExistence type="inferred from homology"/>
<dbReference type="EC" id="2.5.1.46"/>
<dbReference type="EMBL" id="BA000011">
    <property type="protein sequence ID" value="BAB59561.1"/>
    <property type="molecule type" value="Genomic_DNA"/>
</dbReference>
<dbReference type="RefSeq" id="WP_010916676.1">
    <property type="nucleotide sequence ID" value="NC_002689.2"/>
</dbReference>
<dbReference type="SMR" id="Q97BN6"/>
<dbReference type="STRING" id="273116.gene:9381197"/>
<dbReference type="PaxDb" id="273116-14324634"/>
<dbReference type="GeneID" id="1440934"/>
<dbReference type="KEGG" id="tvo:TVG0406345"/>
<dbReference type="eggNOG" id="arCOG04142">
    <property type="taxonomic scope" value="Archaea"/>
</dbReference>
<dbReference type="HOGENOM" id="CLU_039781_1_0_2"/>
<dbReference type="OrthoDB" id="17730at2157"/>
<dbReference type="PhylomeDB" id="Q97BN6"/>
<dbReference type="UniPathway" id="UPA00354"/>
<dbReference type="Proteomes" id="UP000001017">
    <property type="component" value="Chromosome"/>
</dbReference>
<dbReference type="GO" id="GO:0005737">
    <property type="term" value="C:cytoplasm"/>
    <property type="evidence" value="ECO:0007669"/>
    <property type="project" value="TreeGrafter"/>
</dbReference>
<dbReference type="GO" id="GO:0034038">
    <property type="term" value="F:deoxyhypusine synthase activity"/>
    <property type="evidence" value="ECO:0007669"/>
    <property type="project" value="UniProtKB-UniRule"/>
</dbReference>
<dbReference type="FunFam" id="3.40.910.10:FF:000010">
    <property type="entry name" value="Deoxyhypusine synthase"/>
    <property type="match status" value="1"/>
</dbReference>
<dbReference type="Gene3D" id="3.40.910.10">
    <property type="entry name" value="Deoxyhypusine synthase"/>
    <property type="match status" value="1"/>
</dbReference>
<dbReference type="HAMAP" id="MF_00153">
    <property type="entry name" value="DHS"/>
    <property type="match status" value="1"/>
</dbReference>
<dbReference type="InterPro" id="IPR022899">
    <property type="entry name" value="Deoxyhypus_synthase_arc"/>
</dbReference>
<dbReference type="InterPro" id="IPR002773">
    <property type="entry name" value="Deoxyhypusine_synthase"/>
</dbReference>
<dbReference type="InterPro" id="IPR036982">
    <property type="entry name" value="Deoxyhypusine_synthase_sf"/>
</dbReference>
<dbReference type="InterPro" id="IPR029035">
    <property type="entry name" value="DHS-like_NAD/FAD-binding_dom"/>
</dbReference>
<dbReference type="NCBIfam" id="NF002294">
    <property type="entry name" value="PRK01221.1"/>
    <property type="match status" value="1"/>
</dbReference>
<dbReference type="PANTHER" id="PTHR11703">
    <property type="entry name" value="DEOXYHYPUSINE SYNTHASE"/>
    <property type="match status" value="1"/>
</dbReference>
<dbReference type="PANTHER" id="PTHR11703:SF0">
    <property type="entry name" value="DEOXYHYPUSINE SYNTHASE"/>
    <property type="match status" value="1"/>
</dbReference>
<dbReference type="Pfam" id="PF01916">
    <property type="entry name" value="DS"/>
    <property type="match status" value="1"/>
</dbReference>
<dbReference type="SUPFAM" id="SSF52467">
    <property type="entry name" value="DHS-like NAD/FAD-binding domain"/>
    <property type="match status" value="1"/>
</dbReference>
<comment type="function">
    <text evidence="1">Catalyzes the NAD-dependent oxidative cleavage of spermidine and the subsequent transfer of the butylamine moiety of spermidine to the epsilon-amino group of a specific lysine residue of the eIF-5A precursor protein to form the intermediate deoxyhypusine residue.</text>
</comment>
<comment type="catalytic activity">
    <reaction>
        <text>[eIF5A protein]-L-lysine + spermidine = [eIF5A protein]-deoxyhypusine + propane-1,3-diamine</text>
        <dbReference type="Rhea" id="RHEA:33299"/>
        <dbReference type="Rhea" id="RHEA-COMP:10143"/>
        <dbReference type="Rhea" id="RHEA-COMP:10144"/>
        <dbReference type="ChEBI" id="CHEBI:29969"/>
        <dbReference type="ChEBI" id="CHEBI:57484"/>
        <dbReference type="ChEBI" id="CHEBI:57834"/>
        <dbReference type="ChEBI" id="CHEBI:82657"/>
        <dbReference type="EC" id="2.5.1.46"/>
    </reaction>
</comment>
<comment type="cofactor">
    <cofactor evidence="1">
        <name>NAD(+)</name>
        <dbReference type="ChEBI" id="CHEBI:57540"/>
    </cofactor>
</comment>
<comment type="pathway">
    <text>Protein modification; eIF5A hypusination.</text>
</comment>
<comment type="similarity">
    <text evidence="2">Belongs to the deoxyhypusine synthase family.</text>
</comment>
<protein>
    <recommendedName>
        <fullName>Probable deoxyhypusine synthase</fullName>
        <shortName>DHS</shortName>
        <ecNumber>2.5.1.46</ecNumber>
    </recommendedName>
</protein>
<sequence length="310" mass="34951">MDRKELLSKPVQDLRIDGNTTLSNLMAQFSNIGGFTAAKLYEAHSIISDMFLEDNTTFLSFPADIISTGLRGLINDVVKRKLVDVIITTSGTLDHDIARTFGKYYCGSFNYSDVELREININRLGNVLVPDESYGELIEEKVMEQLEKLYSIKKEWATVDLIKEIGLSINNESSILYNAAKNDIPIFVPGITDGSFGSQLWSFYEQHHDFKINLLEDEHRLSDIIFDAKKTGAIMVGGGISKHHTIWWNQFRDGLDYAVYITTAQEYDGSLSGAKLEEAISWKKVRPNARFVNIYGDATVIMPILMAPFL</sequence>
<accession>Q97BN6</accession>
<evidence type="ECO:0000250" key="1"/>
<evidence type="ECO:0000305" key="2"/>
<feature type="chain" id="PRO_0000134511" description="Probable deoxyhypusine synthase">
    <location>
        <begin position="1"/>
        <end position="310"/>
    </location>
</feature>
<feature type="active site" description="Nucleophile" evidence="1">
    <location>
        <position position="284"/>
    </location>
</feature>
<reference key="1">
    <citation type="journal article" date="2000" name="Proc. Natl. Acad. Sci. U.S.A.">
        <title>Archaeal adaptation to higher temperatures revealed by genomic sequence of Thermoplasma volcanium.</title>
        <authorList>
            <person name="Kawashima T."/>
            <person name="Amano N."/>
            <person name="Koike H."/>
            <person name="Makino S."/>
            <person name="Higuchi S."/>
            <person name="Kawashima-Ohya Y."/>
            <person name="Watanabe K."/>
            <person name="Yamazaki M."/>
            <person name="Kanehori K."/>
            <person name="Kawamoto T."/>
            <person name="Nunoshiba T."/>
            <person name="Yamamoto Y."/>
            <person name="Aramaki H."/>
            <person name="Makino K."/>
            <person name="Suzuki M."/>
        </authorList>
    </citation>
    <scope>NUCLEOTIDE SEQUENCE [LARGE SCALE GENOMIC DNA]</scope>
    <source>
        <strain>ATCC 51530 / DSM 4299 / JCM 9571 / NBRC 15438 / GSS1</strain>
    </source>
</reference>
<name>DHYS_THEVO</name>
<gene>
    <name type="primary">dys</name>
    <name type="ordered locus">TV0419</name>
    <name type="ORF">TVG0406345</name>
</gene>